<proteinExistence type="inferred from homology"/>
<accession>C1AY41</accession>
<name>GLMU_RHOOB</name>
<sequence length="500" mass="51670">MPVQTAVVVLAAGAGTRMRSKTPKVLHTLGGRTMLAHSLHAAAEVDPAHLVTVVGHDKERVGAAVGALETELGRPITVAVQEEQNGTGHAVECGLSALPADFRGTVLVTAADVPLLDGHTLHALVDEHRSEPTPAAVTVLTFTAPEPTGYGRIVRLPHDGEIAEIVEEADATEEQAAITEVNAGVYAFDAEFLRTALGQLNANNAQGELYLTDVVKIARASGAPVFAAHLSDSAKVAGANDRVQLSRLAAELNRRTVENWMRAGVTVVDPSTTWIDVGVTLGRDVTIHPGVQLLGTTTVGEDAVIGPDTTLTDVSVGDGASVVRTHGSESTIGAGATVGPFSYLRPGTVLGASGKLGAFVETKNADIGAHSKVPHLTYVGDATIGEYSNIGASSVFVNYDGVAKSRTVVGSHVRTGSDTMFVAPVQVGDGAYTGAGTVLRFDVPPGALAVSGGKQRNIDGWVQRNRPGTPAAEAASAAGPHHSSDLHETEKQDLKDGIEQ</sequence>
<protein>
    <recommendedName>
        <fullName evidence="1">Bifunctional protein GlmU</fullName>
    </recommendedName>
    <domain>
        <recommendedName>
            <fullName evidence="1">UDP-N-acetylglucosamine pyrophosphorylase</fullName>
            <ecNumber evidence="1">2.7.7.23</ecNumber>
        </recommendedName>
        <alternativeName>
            <fullName evidence="1">N-acetylglucosamine-1-phosphate uridyltransferase</fullName>
        </alternativeName>
    </domain>
    <domain>
        <recommendedName>
            <fullName evidence="1">Glucosamine-1-phosphate N-acetyltransferase</fullName>
            <ecNumber evidence="1">2.3.1.157</ecNumber>
        </recommendedName>
    </domain>
</protein>
<keyword id="KW-0012">Acyltransferase</keyword>
<keyword id="KW-0133">Cell shape</keyword>
<keyword id="KW-0961">Cell wall biogenesis/degradation</keyword>
<keyword id="KW-0963">Cytoplasm</keyword>
<keyword id="KW-0460">Magnesium</keyword>
<keyword id="KW-0479">Metal-binding</keyword>
<keyword id="KW-0511">Multifunctional enzyme</keyword>
<keyword id="KW-0548">Nucleotidyltransferase</keyword>
<keyword id="KW-0573">Peptidoglycan synthesis</keyword>
<keyword id="KW-0677">Repeat</keyword>
<keyword id="KW-0808">Transferase</keyword>
<comment type="function">
    <text evidence="1">Catalyzes the last two sequential reactions in the de novo biosynthetic pathway for UDP-N-acetylglucosamine (UDP-GlcNAc). The C-terminal domain catalyzes the transfer of acetyl group from acetyl coenzyme A to glucosamine-1-phosphate (GlcN-1-P) to produce N-acetylglucosamine-1-phosphate (GlcNAc-1-P), which is converted into UDP-GlcNAc by the transfer of uridine 5-monophosphate (from uridine 5-triphosphate), a reaction catalyzed by the N-terminal domain.</text>
</comment>
<comment type="catalytic activity">
    <reaction evidence="1">
        <text>alpha-D-glucosamine 1-phosphate + acetyl-CoA = N-acetyl-alpha-D-glucosamine 1-phosphate + CoA + H(+)</text>
        <dbReference type="Rhea" id="RHEA:13725"/>
        <dbReference type="ChEBI" id="CHEBI:15378"/>
        <dbReference type="ChEBI" id="CHEBI:57287"/>
        <dbReference type="ChEBI" id="CHEBI:57288"/>
        <dbReference type="ChEBI" id="CHEBI:57776"/>
        <dbReference type="ChEBI" id="CHEBI:58516"/>
        <dbReference type="EC" id="2.3.1.157"/>
    </reaction>
</comment>
<comment type="catalytic activity">
    <reaction evidence="1">
        <text>N-acetyl-alpha-D-glucosamine 1-phosphate + UTP + H(+) = UDP-N-acetyl-alpha-D-glucosamine + diphosphate</text>
        <dbReference type="Rhea" id="RHEA:13509"/>
        <dbReference type="ChEBI" id="CHEBI:15378"/>
        <dbReference type="ChEBI" id="CHEBI:33019"/>
        <dbReference type="ChEBI" id="CHEBI:46398"/>
        <dbReference type="ChEBI" id="CHEBI:57705"/>
        <dbReference type="ChEBI" id="CHEBI:57776"/>
        <dbReference type="EC" id="2.7.7.23"/>
    </reaction>
</comment>
<comment type="cofactor">
    <cofactor evidence="1">
        <name>Mg(2+)</name>
        <dbReference type="ChEBI" id="CHEBI:18420"/>
    </cofactor>
    <text evidence="1">Binds 1 Mg(2+) ion per subunit.</text>
</comment>
<comment type="pathway">
    <text evidence="1">Nucleotide-sugar biosynthesis; UDP-N-acetyl-alpha-D-glucosamine biosynthesis; N-acetyl-alpha-D-glucosamine 1-phosphate from alpha-D-glucosamine 6-phosphate (route II): step 2/2.</text>
</comment>
<comment type="pathway">
    <text evidence="1">Nucleotide-sugar biosynthesis; UDP-N-acetyl-alpha-D-glucosamine biosynthesis; UDP-N-acetyl-alpha-D-glucosamine from N-acetyl-alpha-D-glucosamine 1-phosphate: step 1/1.</text>
</comment>
<comment type="pathway">
    <text evidence="1">Bacterial outer membrane biogenesis; LPS lipid A biosynthesis.</text>
</comment>
<comment type="subunit">
    <text evidence="1">Homotrimer.</text>
</comment>
<comment type="subcellular location">
    <subcellularLocation>
        <location evidence="1">Cytoplasm</location>
    </subcellularLocation>
</comment>
<comment type="similarity">
    <text evidence="1">In the N-terminal section; belongs to the N-acetylglucosamine-1-phosphate uridyltransferase family.</text>
</comment>
<comment type="similarity">
    <text evidence="1">In the C-terminal section; belongs to the transferase hexapeptide repeat family.</text>
</comment>
<gene>
    <name evidence="1" type="primary">glmU</name>
    <name type="ordered locus">ROP_57890</name>
</gene>
<dbReference type="EC" id="2.7.7.23" evidence="1"/>
<dbReference type="EC" id="2.3.1.157" evidence="1"/>
<dbReference type="EMBL" id="AP011115">
    <property type="protein sequence ID" value="BAH54036.1"/>
    <property type="molecule type" value="Genomic_DNA"/>
</dbReference>
<dbReference type="RefSeq" id="WP_015889530.1">
    <property type="nucleotide sequence ID" value="NC_012522.1"/>
</dbReference>
<dbReference type="SMR" id="C1AY41"/>
<dbReference type="STRING" id="632772.ROP_57890"/>
<dbReference type="KEGG" id="rop:ROP_57890"/>
<dbReference type="PATRIC" id="fig|632772.20.peg.6047"/>
<dbReference type="HOGENOM" id="CLU_029499_15_2_11"/>
<dbReference type="OrthoDB" id="9775031at2"/>
<dbReference type="UniPathway" id="UPA00113">
    <property type="reaction ID" value="UER00532"/>
</dbReference>
<dbReference type="UniPathway" id="UPA00113">
    <property type="reaction ID" value="UER00533"/>
</dbReference>
<dbReference type="UniPathway" id="UPA00973"/>
<dbReference type="Proteomes" id="UP000002212">
    <property type="component" value="Chromosome"/>
</dbReference>
<dbReference type="GO" id="GO:0005737">
    <property type="term" value="C:cytoplasm"/>
    <property type="evidence" value="ECO:0007669"/>
    <property type="project" value="UniProtKB-SubCell"/>
</dbReference>
<dbReference type="GO" id="GO:0016020">
    <property type="term" value="C:membrane"/>
    <property type="evidence" value="ECO:0007669"/>
    <property type="project" value="GOC"/>
</dbReference>
<dbReference type="GO" id="GO:0019134">
    <property type="term" value="F:glucosamine-1-phosphate N-acetyltransferase activity"/>
    <property type="evidence" value="ECO:0007669"/>
    <property type="project" value="UniProtKB-UniRule"/>
</dbReference>
<dbReference type="GO" id="GO:0000287">
    <property type="term" value="F:magnesium ion binding"/>
    <property type="evidence" value="ECO:0007669"/>
    <property type="project" value="UniProtKB-UniRule"/>
</dbReference>
<dbReference type="GO" id="GO:0003977">
    <property type="term" value="F:UDP-N-acetylglucosamine diphosphorylase activity"/>
    <property type="evidence" value="ECO:0007669"/>
    <property type="project" value="UniProtKB-UniRule"/>
</dbReference>
<dbReference type="GO" id="GO:0000902">
    <property type="term" value="P:cell morphogenesis"/>
    <property type="evidence" value="ECO:0007669"/>
    <property type="project" value="UniProtKB-UniRule"/>
</dbReference>
<dbReference type="GO" id="GO:0071555">
    <property type="term" value="P:cell wall organization"/>
    <property type="evidence" value="ECO:0007669"/>
    <property type="project" value="UniProtKB-KW"/>
</dbReference>
<dbReference type="GO" id="GO:0009245">
    <property type="term" value="P:lipid A biosynthetic process"/>
    <property type="evidence" value="ECO:0007669"/>
    <property type="project" value="UniProtKB-UniRule"/>
</dbReference>
<dbReference type="GO" id="GO:0009252">
    <property type="term" value="P:peptidoglycan biosynthetic process"/>
    <property type="evidence" value="ECO:0007669"/>
    <property type="project" value="UniProtKB-UniRule"/>
</dbReference>
<dbReference type="GO" id="GO:0008360">
    <property type="term" value="P:regulation of cell shape"/>
    <property type="evidence" value="ECO:0007669"/>
    <property type="project" value="UniProtKB-KW"/>
</dbReference>
<dbReference type="GO" id="GO:0006048">
    <property type="term" value="P:UDP-N-acetylglucosamine biosynthetic process"/>
    <property type="evidence" value="ECO:0007669"/>
    <property type="project" value="UniProtKB-UniPathway"/>
</dbReference>
<dbReference type="CDD" id="cd02540">
    <property type="entry name" value="GT2_GlmU_N_bac"/>
    <property type="match status" value="1"/>
</dbReference>
<dbReference type="CDD" id="cd03353">
    <property type="entry name" value="LbH_GlmU_C"/>
    <property type="match status" value="1"/>
</dbReference>
<dbReference type="Gene3D" id="2.160.10.10">
    <property type="entry name" value="Hexapeptide repeat proteins"/>
    <property type="match status" value="1"/>
</dbReference>
<dbReference type="Gene3D" id="3.90.550.10">
    <property type="entry name" value="Spore Coat Polysaccharide Biosynthesis Protein SpsA, Chain A"/>
    <property type="match status" value="1"/>
</dbReference>
<dbReference type="HAMAP" id="MF_01631">
    <property type="entry name" value="GlmU"/>
    <property type="match status" value="1"/>
</dbReference>
<dbReference type="InterPro" id="IPR005882">
    <property type="entry name" value="Bifunctional_GlmU"/>
</dbReference>
<dbReference type="InterPro" id="IPR050065">
    <property type="entry name" value="GlmU-like"/>
</dbReference>
<dbReference type="InterPro" id="IPR038009">
    <property type="entry name" value="GlmU_C_LbH"/>
</dbReference>
<dbReference type="InterPro" id="IPR001451">
    <property type="entry name" value="Hexapep"/>
</dbReference>
<dbReference type="InterPro" id="IPR025877">
    <property type="entry name" value="MobA-like_NTP_Trfase"/>
</dbReference>
<dbReference type="InterPro" id="IPR029044">
    <property type="entry name" value="Nucleotide-diphossugar_trans"/>
</dbReference>
<dbReference type="InterPro" id="IPR011004">
    <property type="entry name" value="Trimer_LpxA-like_sf"/>
</dbReference>
<dbReference type="NCBIfam" id="TIGR01173">
    <property type="entry name" value="glmU"/>
    <property type="match status" value="1"/>
</dbReference>
<dbReference type="NCBIfam" id="NF010932">
    <property type="entry name" value="PRK14352.1"/>
    <property type="match status" value="1"/>
</dbReference>
<dbReference type="PANTHER" id="PTHR43584:SF3">
    <property type="entry name" value="BIFUNCTIONAL PROTEIN GLMU"/>
    <property type="match status" value="1"/>
</dbReference>
<dbReference type="PANTHER" id="PTHR43584">
    <property type="entry name" value="NUCLEOTIDYL TRANSFERASE"/>
    <property type="match status" value="1"/>
</dbReference>
<dbReference type="Pfam" id="PF00132">
    <property type="entry name" value="Hexapep"/>
    <property type="match status" value="1"/>
</dbReference>
<dbReference type="Pfam" id="PF12804">
    <property type="entry name" value="NTP_transf_3"/>
    <property type="match status" value="1"/>
</dbReference>
<dbReference type="SUPFAM" id="SSF53448">
    <property type="entry name" value="Nucleotide-diphospho-sugar transferases"/>
    <property type="match status" value="1"/>
</dbReference>
<dbReference type="SUPFAM" id="SSF51161">
    <property type="entry name" value="Trimeric LpxA-like enzymes"/>
    <property type="match status" value="1"/>
</dbReference>
<evidence type="ECO:0000255" key="1">
    <source>
        <dbReference type="HAMAP-Rule" id="MF_01631"/>
    </source>
</evidence>
<evidence type="ECO:0000256" key="2">
    <source>
        <dbReference type="SAM" id="MobiDB-lite"/>
    </source>
</evidence>
<feature type="chain" id="PRO_1000186478" description="Bifunctional protein GlmU">
    <location>
        <begin position="1"/>
        <end position="500"/>
    </location>
</feature>
<feature type="region of interest" description="Pyrophosphorylase" evidence="1">
    <location>
        <begin position="1"/>
        <end position="242"/>
    </location>
</feature>
<feature type="region of interest" description="Linker" evidence="1">
    <location>
        <begin position="243"/>
        <end position="263"/>
    </location>
</feature>
<feature type="region of interest" description="N-acetyltransferase" evidence="1">
    <location>
        <begin position="264"/>
        <end position="500"/>
    </location>
</feature>
<feature type="region of interest" description="Disordered" evidence="2">
    <location>
        <begin position="459"/>
        <end position="500"/>
    </location>
</feature>
<feature type="compositionally biased region" description="Basic and acidic residues" evidence="2">
    <location>
        <begin position="482"/>
        <end position="500"/>
    </location>
</feature>
<feature type="active site" description="Proton acceptor" evidence="1">
    <location>
        <position position="375"/>
    </location>
</feature>
<feature type="binding site" evidence="1">
    <location>
        <begin position="10"/>
        <end position="13"/>
    </location>
    <ligand>
        <name>UDP-N-acetyl-alpha-D-glucosamine</name>
        <dbReference type="ChEBI" id="CHEBI:57705"/>
    </ligand>
</feature>
<feature type="binding site" evidence="1">
    <location>
        <position position="24"/>
    </location>
    <ligand>
        <name>UDP-N-acetyl-alpha-D-glucosamine</name>
        <dbReference type="ChEBI" id="CHEBI:57705"/>
    </ligand>
</feature>
<feature type="binding site" evidence="1">
    <location>
        <position position="81"/>
    </location>
    <ligand>
        <name>UDP-N-acetyl-alpha-D-glucosamine</name>
        <dbReference type="ChEBI" id="CHEBI:57705"/>
    </ligand>
</feature>
<feature type="binding site" evidence="1">
    <location>
        <begin position="86"/>
        <end position="87"/>
    </location>
    <ligand>
        <name>UDP-N-acetyl-alpha-D-glucosamine</name>
        <dbReference type="ChEBI" id="CHEBI:57705"/>
    </ligand>
</feature>
<feature type="binding site" evidence="1">
    <location>
        <position position="112"/>
    </location>
    <ligand>
        <name>Mg(2+)</name>
        <dbReference type="ChEBI" id="CHEBI:18420"/>
    </ligand>
</feature>
<feature type="binding site" evidence="1">
    <location>
        <position position="151"/>
    </location>
    <ligand>
        <name>UDP-N-acetyl-alpha-D-glucosamine</name>
        <dbReference type="ChEBI" id="CHEBI:57705"/>
    </ligand>
</feature>
<feature type="binding site" evidence="1">
    <location>
        <position position="167"/>
    </location>
    <ligand>
        <name>UDP-N-acetyl-alpha-D-glucosamine</name>
        <dbReference type="ChEBI" id="CHEBI:57705"/>
    </ligand>
</feature>
<feature type="binding site" evidence="1">
    <location>
        <position position="182"/>
    </location>
    <ligand>
        <name>UDP-N-acetyl-alpha-D-glucosamine</name>
        <dbReference type="ChEBI" id="CHEBI:57705"/>
    </ligand>
</feature>
<feature type="binding site" evidence="1">
    <location>
        <position position="240"/>
    </location>
    <ligand>
        <name>Mg(2+)</name>
        <dbReference type="ChEBI" id="CHEBI:18420"/>
    </ligand>
</feature>
<feature type="binding site" evidence="1">
    <location>
        <position position="240"/>
    </location>
    <ligand>
        <name>UDP-N-acetyl-alpha-D-glucosamine</name>
        <dbReference type="ChEBI" id="CHEBI:57705"/>
    </ligand>
</feature>
<feature type="binding site" evidence="1">
    <location>
        <position position="345"/>
    </location>
    <ligand>
        <name>UDP-N-acetyl-alpha-D-glucosamine</name>
        <dbReference type="ChEBI" id="CHEBI:57705"/>
    </ligand>
</feature>
<feature type="binding site" evidence="1">
    <location>
        <position position="363"/>
    </location>
    <ligand>
        <name>UDP-N-acetyl-alpha-D-glucosamine</name>
        <dbReference type="ChEBI" id="CHEBI:57705"/>
    </ligand>
</feature>
<feature type="binding site" evidence="1">
    <location>
        <position position="378"/>
    </location>
    <ligand>
        <name>UDP-N-acetyl-alpha-D-glucosamine</name>
        <dbReference type="ChEBI" id="CHEBI:57705"/>
    </ligand>
</feature>
<feature type="binding site" evidence="1">
    <location>
        <position position="389"/>
    </location>
    <ligand>
        <name>UDP-N-acetyl-alpha-D-glucosamine</name>
        <dbReference type="ChEBI" id="CHEBI:57705"/>
    </ligand>
</feature>
<feature type="binding site" evidence="1">
    <location>
        <position position="392"/>
    </location>
    <ligand>
        <name>acetyl-CoA</name>
        <dbReference type="ChEBI" id="CHEBI:57288"/>
    </ligand>
</feature>
<feature type="binding site" evidence="1">
    <location>
        <begin position="398"/>
        <end position="399"/>
    </location>
    <ligand>
        <name>acetyl-CoA</name>
        <dbReference type="ChEBI" id="CHEBI:57288"/>
    </ligand>
</feature>
<feature type="binding site" evidence="1">
    <location>
        <position position="417"/>
    </location>
    <ligand>
        <name>acetyl-CoA</name>
        <dbReference type="ChEBI" id="CHEBI:57288"/>
    </ligand>
</feature>
<feature type="binding site" evidence="1">
    <location>
        <position position="435"/>
    </location>
    <ligand>
        <name>acetyl-CoA</name>
        <dbReference type="ChEBI" id="CHEBI:57288"/>
    </ligand>
</feature>
<organism>
    <name type="scientific">Rhodococcus opacus (strain B4)</name>
    <dbReference type="NCBI Taxonomy" id="632772"/>
    <lineage>
        <taxon>Bacteria</taxon>
        <taxon>Bacillati</taxon>
        <taxon>Actinomycetota</taxon>
        <taxon>Actinomycetes</taxon>
        <taxon>Mycobacteriales</taxon>
        <taxon>Nocardiaceae</taxon>
        <taxon>Rhodococcus</taxon>
    </lineage>
</organism>
<reference key="1">
    <citation type="submission" date="2009-03" db="EMBL/GenBank/DDBJ databases">
        <title>Comparison of the complete genome sequences of Rhodococcus erythropolis PR4 and Rhodococcus opacus B4.</title>
        <authorList>
            <person name="Takarada H."/>
            <person name="Sekine M."/>
            <person name="Hosoyama A."/>
            <person name="Yamada R."/>
            <person name="Fujisawa T."/>
            <person name="Omata S."/>
            <person name="Shimizu A."/>
            <person name="Tsukatani N."/>
            <person name="Tanikawa S."/>
            <person name="Fujita N."/>
            <person name="Harayama S."/>
        </authorList>
    </citation>
    <scope>NUCLEOTIDE SEQUENCE [LARGE SCALE GENOMIC DNA]</scope>
    <source>
        <strain>B4</strain>
    </source>
</reference>